<organism>
    <name type="scientific">Rhodococcus opacus (strain B4)</name>
    <dbReference type="NCBI Taxonomy" id="632772"/>
    <lineage>
        <taxon>Bacteria</taxon>
        <taxon>Bacillati</taxon>
        <taxon>Actinomycetota</taxon>
        <taxon>Actinomycetes</taxon>
        <taxon>Mycobacteriales</taxon>
        <taxon>Nocardiaceae</taxon>
        <taxon>Rhodococcus</taxon>
    </lineage>
</organism>
<feature type="chain" id="PRO_1000196261" description="Large ribosomal subunit protein bL9">
    <location>
        <begin position="1"/>
        <end position="151"/>
    </location>
</feature>
<name>RL9_RHOOB</name>
<accession>C1B716</accession>
<protein>
    <recommendedName>
        <fullName evidence="1">Large ribosomal subunit protein bL9</fullName>
    </recommendedName>
    <alternativeName>
        <fullName evidence="2">50S ribosomal protein L9</fullName>
    </alternativeName>
</protein>
<reference key="1">
    <citation type="submission" date="2009-03" db="EMBL/GenBank/DDBJ databases">
        <title>Comparison of the complete genome sequences of Rhodococcus erythropolis PR4 and Rhodococcus opacus B4.</title>
        <authorList>
            <person name="Takarada H."/>
            <person name="Sekine M."/>
            <person name="Hosoyama A."/>
            <person name="Yamada R."/>
            <person name="Fujisawa T."/>
            <person name="Omata S."/>
            <person name="Shimizu A."/>
            <person name="Tsukatani N."/>
            <person name="Tanikawa S."/>
            <person name="Fujita N."/>
            <person name="Harayama S."/>
        </authorList>
    </citation>
    <scope>NUCLEOTIDE SEQUENCE [LARGE SCALE GENOMIC DNA]</scope>
    <source>
        <strain>B4</strain>
    </source>
</reference>
<evidence type="ECO:0000255" key="1">
    <source>
        <dbReference type="HAMAP-Rule" id="MF_00503"/>
    </source>
</evidence>
<evidence type="ECO:0000305" key="2"/>
<comment type="function">
    <text evidence="1">Binds to the 23S rRNA.</text>
</comment>
<comment type="similarity">
    <text evidence="1">Belongs to the bacterial ribosomal protein bL9 family.</text>
</comment>
<sequence>MKLILTADVDNLGAPGDTVEVKDGYGRNYLLPRGLAIVATRGAEKQVEGIRRAQEARAVRGLDHAKELKDAIEGLESISLTVKTAGDSGKLFGSVTAADVAAAIKAAGGPVVDKRSLELPKAHIKATGKHAIVVNLHPDVVAKFHLNVVGA</sequence>
<gene>
    <name evidence="1" type="primary">rplI</name>
    <name type="ordered locus">ROP_32220</name>
</gene>
<keyword id="KW-0687">Ribonucleoprotein</keyword>
<keyword id="KW-0689">Ribosomal protein</keyword>
<keyword id="KW-0694">RNA-binding</keyword>
<keyword id="KW-0699">rRNA-binding</keyword>
<proteinExistence type="inferred from homology"/>
<dbReference type="EMBL" id="AP011115">
    <property type="protein sequence ID" value="BAH51469.1"/>
    <property type="molecule type" value="Genomic_DNA"/>
</dbReference>
<dbReference type="RefSeq" id="WP_012690422.1">
    <property type="nucleotide sequence ID" value="NC_012522.1"/>
</dbReference>
<dbReference type="SMR" id="C1B716"/>
<dbReference type="STRING" id="632772.ROP_32220"/>
<dbReference type="KEGG" id="rop:ROP_32220"/>
<dbReference type="PATRIC" id="fig|632772.20.peg.3378"/>
<dbReference type="HOGENOM" id="CLU_078938_5_1_11"/>
<dbReference type="OrthoDB" id="9788336at2"/>
<dbReference type="Proteomes" id="UP000002212">
    <property type="component" value="Chromosome"/>
</dbReference>
<dbReference type="GO" id="GO:1990904">
    <property type="term" value="C:ribonucleoprotein complex"/>
    <property type="evidence" value="ECO:0007669"/>
    <property type="project" value="UniProtKB-KW"/>
</dbReference>
<dbReference type="GO" id="GO:0005840">
    <property type="term" value="C:ribosome"/>
    <property type="evidence" value="ECO:0007669"/>
    <property type="project" value="UniProtKB-KW"/>
</dbReference>
<dbReference type="GO" id="GO:0019843">
    <property type="term" value="F:rRNA binding"/>
    <property type="evidence" value="ECO:0007669"/>
    <property type="project" value="UniProtKB-UniRule"/>
</dbReference>
<dbReference type="GO" id="GO:0003735">
    <property type="term" value="F:structural constituent of ribosome"/>
    <property type="evidence" value="ECO:0007669"/>
    <property type="project" value="InterPro"/>
</dbReference>
<dbReference type="GO" id="GO:0006412">
    <property type="term" value="P:translation"/>
    <property type="evidence" value="ECO:0007669"/>
    <property type="project" value="UniProtKB-UniRule"/>
</dbReference>
<dbReference type="FunFam" id="3.40.5.10:FF:000003">
    <property type="entry name" value="50S ribosomal protein L9"/>
    <property type="match status" value="1"/>
</dbReference>
<dbReference type="Gene3D" id="3.10.430.100">
    <property type="entry name" value="Ribosomal protein L9, C-terminal domain"/>
    <property type="match status" value="1"/>
</dbReference>
<dbReference type="Gene3D" id="3.40.5.10">
    <property type="entry name" value="Ribosomal protein L9, N-terminal domain"/>
    <property type="match status" value="1"/>
</dbReference>
<dbReference type="HAMAP" id="MF_00503">
    <property type="entry name" value="Ribosomal_bL9"/>
    <property type="match status" value="1"/>
</dbReference>
<dbReference type="InterPro" id="IPR000244">
    <property type="entry name" value="Ribosomal_bL9"/>
</dbReference>
<dbReference type="InterPro" id="IPR009027">
    <property type="entry name" value="Ribosomal_bL9/RNase_H1_N"/>
</dbReference>
<dbReference type="InterPro" id="IPR020594">
    <property type="entry name" value="Ribosomal_bL9_bac/chp"/>
</dbReference>
<dbReference type="InterPro" id="IPR020069">
    <property type="entry name" value="Ribosomal_bL9_C"/>
</dbReference>
<dbReference type="InterPro" id="IPR036791">
    <property type="entry name" value="Ribosomal_bL9_C_sf"/>
</dbReference>
<dbReference type="InterPro" id="IPR020070">
    <property type="entry name" value="Ribosomal_bL9_N"/>
</dbReference>
<dbReference type="InterPro" id="IPR036935">
    <property type="entry name" value="Ribosomal_bL9_N_sf"/>
</dbReference>
<dbReference type="NCBIfam" id="TIGR00158">
    <property type="entry name" value="L9"/>
    <property type="match status" value="1"/>
</dbReference>
<dbReference type="PANTHER" id="PTHR21368">
    <property type="entry name" value="50S RIBOSOMAL PROTEIN L9"/>
    <property type="match status" value="1"/>
</dbReference>
<dbReference type="Pfam" id="PF03948">
    <property type="entry name" value="Ribosomal_L9_C"/>
    <property type="match status" value="1"/>
</dbReference>
<dbReference type="Pfam" id="PF01281">
    <property type="entry name" value="Ribosomal_L9_N"/>
    <property type="match status" value="1"/>
</dbReference>
<dbReference type="SUPFAM" id="SSF55658">
    <property type="entry name" value="L9 N-domain-like"/>
    <property type="match status" value="1"/>
</dbReference>
<dbReference type="SUPFAM" id="SSF55653">
    <property type="entry name" value="Ribosomal protein L9 C-domain"/>
    <property type="match status" value="1"/>
</dbReference>
<dbReference type="PROSITE" id="PS00651">
    <property type="entry name" value="RIBOSOMAL_L9"/>
    <property type="match status" value="1"/>
</dbReference>